<organism>
    <name type="scientific">Caenorhabditis elegans</name>
    <dbReference type="NCBI Taxonomy" id="6239"/>
    <lineage>
        <taxon>Eukaryota</taxon>
        <taxon>Metazoa</taxon>
        <taxon>Ecdysozoa</taxon>
        <taxon>Nematoda</taxon>
        <taxon>Chromadorea</taxon>
        <taxon>Rhabditida</taxon>
        <taxon>Rhabditina</taxon>
        <taxon>Rhabditomorpha</taxon>
        <taxon>Rhabditoidea</taxon>
        <taxon>Rhabditidae</taxon>
        <taxon>Peloderinae</taxon>
        <taxon>Caenorhabditis</taxon>
    </lineage>
</organism>
<sequence length="329" mass="38223">MSEASKSIMDLLSEVVKITDMTMDNEAVNKLKPQIKINPFYRAVQDVLVEQKSKIDLSTKMMKDLEAQENDERLDTMLKAEGVAGPDDSLLRIQEAAGTDQYEYRQQLLKVRRELENETKAFDKHCKKWCEYVEDVLQQQGEFRPITQQSTEKFMNKMSGKFNKVCFVLKQTACEEVIQLKKRYLDARRKRRNFSKTSTEILNEYFLANINHPYPSEEVKQALAMQCNISVAQVSNWFGNKRIRYKKTMAKNEDERRENRKPEDRPPPGAPGAPYSLVPNAFAGMMNPYQMMLPGHQFPIGVAPFNFSMYNPEMMAQYQQSLQNPNQTR</sequence>
<evidence type="ECO:0000255" key="1">
    <source>
        <dbReference type="PROSITE-ProRule" id="PRU00108"/>
    </source>
</evidence>
<evidence type="ECO:0000255" key="2">
    <source>
        <dbReference type="PROSITE-ProRule" id="PRU01322"/>
    </source>
</evidence>
<evidence type="ECO:0000256" key="3">
    <source>
        <dbReference type="SAM" id="MobiDB-lite"/>
    </source>
</evidence>
<evidence type="ECO:0000269" key="4">
    <source>
    </source>
</evidence>
<evidence type="ECO:0000269" key="5">
    <source>
    </source>
</evidence>
<evidence type="ECO:0000305" key="6"/>
<dbReference type="EMBL" id="BX284606">
    <property type="protein sequence ID" value="CAA92154.1"/>
    <property type="molecule type" value="Genomic_DNA"/>
</dbReference>
<dbReference type="PIR" id="T21038">
    <property type="entry name" value="T21038"/>
</dbReference>
<dbReference type="RefSeq" id="NP_510060.1">
    <property type="nucleotide sequence ID" value="NM_077659.4"/>
</dbReference>
<dbReference type="SMR" id="Q19503"/>
<dbReference type="BioGRID" id="56126">
    <property type="interactions" value="11"/>
</dbReference>
<dbReference type="DIP" id="DIP-27213N"/>
<dbReference type="IntAct" id="Q19503">
    <property type="interactions" value="9"/>
</dbReference>
<dbReference type="STRING" id="6239.F17A2.5.1"/>
<dbReference type="PaxDb" id="6239-F17A2.5"/>
<dbReference type="EnsemblMetazoa" id="F17A2.5.1">
    <property type="protein sequence ID" value="F17A2.5.1"/>
    <property type="gene ID" value="WBGene00000461"/>
</dbReference>
<dbReference type="GeneID" id="191624"/>
<dbReference type="KEGG" id="cel:CELE_F17A2.5"/>
<dbReference type="UCSC" id="F17A2.5">
    <property type="organism name" value="c. elegans"/>
</dbReference>
<dbReference type="AGR" id="WB:WBGene00000461"/>
<dbReference type="CTD" id="191624"/>
<dbReference type="WormBase" id="F17A2.5">
    <property type="protein sequence ID" value="CE03215"/>
    <property type="gene ID" value="WBGene00000461"/>
    <property type="gene designation" value="ceh-40"/>
</dbReference>
<dbReference type="eggNOG" id="KOG0774">
    <property type="taxonomic scope" value="Eukaryota"/>
</dbReference>
<dbReference type="HOGENOM" id="CLU_041153_1_0_1"/>
<dbReference type="InParanoid" id="Q19503"/>
<dbReference type="OMA" id="YNPEMMA"/>
<dbReference type="OrthoDB" id="4187154at2759"/>
<dbReference type="PhylomeDB" id="Q19503"/>
<dbReference type="SignaLink" id="Q19503"/>
<dbReference type="PRO" id="PR:Q19503"/>
<dbReference type="Proteomes" id="UP000001940">
    <property type="component" value="Chromosome X"/>
</dbReference>
<dbReference type="Bgee" id="WBGene00000461">
    <property type="expression patterns" value="Expressed in embryo and 3 other cell types or tissues"/>
</dbReference>
<dbReference type="GO" id="GO:0005634">
    <property type="term" value="C:nucleus"/>
    <property type="evidence" value="ECO:0007669"/>
    <property type="project" value="UniProtKB-SubCell"/>
</dbReference>
<dbReference type="GO" id="GO:0000987">
    <property type="term" value="F:cis-regulatory region sequence-specific DNA binding"/>
    <property type="evidence" value="ECO:0007669"/>
    <property type="project" value="UniProtKB-ARBA"/>
</dbReference>
<dbReference type="GO" id="GO:0000981">
    <property type="term" value="F:DNA-binding transcription factor activity, RNA polymerase II-specific"/>
    <property type="evidence" value="ECO:0007669"/>
    <property type="project" value="InterPro"/>
</dbReference>
<dbReference type="GO" id="GO:0009887">
    <property type="term" value="P:animal organ morphogenesis"/>
    <property type="evidence" value="ECO:0000318"/>
    <property type="project" value="GO_Central"/>
</dbReference>
<dbReference type="GO" id="GO:0048568">
    <property type="term" value="P:embryonic organ development"/>
    <property type="evidence" value="ECO:0000318"/>
    <property type="project" value="GO_Central"/>
</dbReference>
<dbReference type="GO" id="GO:0048666">
    <property type="term" value="P:neuron development"/>
    <property type="evidence" value="ECO:0000318"/>
    <property type="project" value="GO_Central"/>
</dbReference>
<dbReference type="CDD" id="cd00086">
    <property type="entry name" value="homeodomain"/>
    <property type="match status" value="1"/>
</dbReference>
<dbReference type="Gene3D" id="1.10.10.60">
    <property type="entry name" value="Homeodomain-like"/>
    <property type="match status" value="1"/>
</dbReference>
<dbReference type="InterPro" id="IPR001356">
    <property type="entry name" value="HD"/>
</dbReference>
<dbReference type="InterPro" id="IPR017970">
    <property type="entry name" value="Homeobox_CS"/>
</dbReference>
<dbReference type="InterPro" id="IPR009057">
    <property type="entry name" value="Homeodomain-like_sf"/>
</dbReference>
<dbReference type="InterPro" id="IPR008422">
    <property type="entry name" value="KN_HD"/>
</dbReference>
<dbReference type="InterPro" id="IPR005542">
    <property type="entry name" value="PBX_PBC_dom"/>
</dbReference>
<dbReference type="InterPro" id="IPR050224">
    <property type="entry name" value="TALE_homeobox"/>
</dbReference>
<dbReference type="PANTHER" id="PTHR11850">
    <property type="entry name" value="HOMEOBOX PROTEIN TRANSCRIPTION FACTORS"/>
    <property type="match status" value="1"/>
</dbReference>
<dbReference type="Pfam" id="PF05920">
    <property type="entry name" value="Homeobox_KN"/>
    <property type="match status" value="1"/>
</dbReference>
<dbReference type="Pfam" id="PF03792">
    <property type="entry name" value="PBC"/>
    <property type="match status" value="1"/>
</dbReference>
<dbReference type="SMART" id="SM00389">
    <property type="entry name" value="HOX"/>
    <property type="match status" value="1"/>
</dbReference>
<dbReference type="SUPFAM" id="SSF46689">
    <property type="entry name" value="Homeodomain-like"/>
    <property type="match status" value="1"/>
</dbReference>
<dbReference type="PROSITE" id="PS00027">
    <property type="entry name" value="HOMEOBOX_1"/>
    <property type="match status" value="1"/>
</dbReference>
<dbReference type="PROSITE" id="PS50071">
    <property type="entry name" value="HOMEOBOX_2"/>
    <property type="match status" value="1"/>
</dbReference>
<dbReference type="PROSITE" id="PS51978">
    <property type="entry name" value="PBC"/>
    <property type="match status" value="1"/>
</dbReference>
<proteinExistence type="evidence at protein level"/>
<protein>
    <recommendedName>
        <fullName>Homeobox protein ceh-40</fullName>
    </recommendedName>
</protein>
<keyword id="KW-0217">Developmental protein</keyword>
<keyword id="KW-0238">DNA-binding</keyword>
<keyword id="KW-0371">Homeobox</keyword>
<keyword id="KW-0539">Nucleus</keyword>
<keyword id="KW-1185">Reference proteome</keyword>
<gene>
    <name type="primary">ceh-40</name>
    <name type="ORF">F17A2.5</name>
</gene>
<feature type="chain" id="PRO_0000049003" description="Homeobox protein ceh-40">
    <location>
        <begin position="1"/>
        <end position="329"/>
    </location>
</feature>
<feature type="domain" description="PBC" evidence="2">
    <location>
        <begin position="3"/>
        <end position="186"/>
    </location>
</feature>
<feature type="DNA-binding region" description="Homeobox; TALE-type" evidence="1">
    <location>
        <begin position="187"/>
        <end position="249"/>
    </location>
</feature>
<feature type="region of interest" description="PBC-A" evidence="2">
    <location>
        <begin position="10"/>
        <end position="90"/>
    </location>
</feature>
<feature type="region of interest" description="PBC-B" evidence="2">
    <location>
        <begin position="93"/>
        <end position="186"/>
    </location>
</feature>
<feature type="region of interest" description="Disordered" evidence="3">
    <location>
        <begin position="248"/>
        <end position="275"/>
    </location>
</feature>
<feature type="compositionally biased region" description="Basic and acidic residues" evidence="3">
    <location>
        <begin position="250"/>
        <end position="266"/>
    </location>
</feature>
<reference key="1">
    <citation type="journal article" date="1998" name="Science">
        <title>Genome sequence of the nematode C. elegans: a platform for investigating biology.</title>
        <authorList>
            <consortium name="The C. elegans sequencing consortium"/>
        </authorList>
    </citation>
    <scope>NUCLEOTIDE SEQUENCE [LARGE SCALE GENOMIC DNA]</scope>
    <source>
        <strain>Bristol N2</strain>
    </source>
</reference>
<reference key="2">
    <citation type="journal article" date="2002" name="Development">
        <title>Roles of the Homothorax/Meis/Prep homolog UNC-62 and the Exd/Pbx homologs CEH-20 and CEH-40 in C. elegans embryogenesis.</title>
        <authorList>
            <person name="Van Auken K."/>
            <person name="Weaver D."/>
            <person name="Robertson B."/>
            <person name="Sundaram M."/>
            <person name="Saldi T."/>
            <person name="Edgar L."/>
            <person name="Elling U."/>
            <person name="Lee M."/>
            <person name="Boese Q."/>
            <person name="Wood W.B."/>
        </authorList>
    </citation>
    <scope>DEVELOPMENTAL STAGE</scope>
    <scope>DISRUPTION PHENOTYPE</scope>
</reference>
<reference key="3">
    <citation type="journal article" date="2013" name="Genes Dev.">
        <title>A combinatorial regulatory signature controls terminal differentiation of the dopaminergic nervous system in C. elegans.</title>
        <authorList>
            <person name="Doitsidou M."/>
            <person name="Flames N."/>
            <person name="Topalidou I."/>
            <person name="Abe N."/>
            <person name="Felton T."/>
            <person name="Remesal L."/>
            <person name="Popovitchenko T."/>
            <person name="Mann R."/>
            <person name="Chalfie M."/>
            <person name="Hobert O."/>
        </authorList>
    </citation>
    <scope>FUNCTION</scope>
    <scope>TISSUE SPECIFICITY</scope>
</reference>
<name>HM40_CAEEL</name>
<accession>Q19503</accession>
<comment type="function">
    <text evidence="5">Plays a role in regulating gene expression in dopaminergic neurons, acting redundantly with homeobox protein ceh-20 in head neurons (PubMed:23788625). May activate dopamine pathway genes in concert with ETS domain-containing protein ast-1, and homeobox proteins ceh-43 and ceh-20 (PubMed:23788625).</text>
</comment>
<comment type="interaction">
    <interactant intactId="EBI-319764">
        <id>Q19503</id>
    </interactant>
    <interactant intactId="EBI-319775">
        <id>Q9N5D6</id>
        <label>unc-62</label>
    </interactant>
    <organismsDiffer>false</organismsDiffer>
    <experiments>4</experiments>
</comment>
<comment type="subcellular location">
    <subcellularLocation>
        <location evidence="6">Nucleus</location>
    </subcellularLocation>
</comment>
<comment type="tissue specificity">
    <text evidence="5">Expressed in head dopaminergic neurons.</text>
</comment>
<comment type="developmental stage">
    <text evidence="4">Expressed in embryos.</text>
</comment>
<comment type="disruption phenotype">
    <text evidence="4">Worms show no phenotype but, when also lacking ceh-20, incompletely penetrant embryonic lethality is observed.</text>
</comment>
<comment type="similarity">
    <text evidence="6">Belongs to the TALE/PBX homeobox family.</text>
</comment>